<organismHost>
    <name type="scientific">Bos taurus</name>
    <name type="common">Bovine</name>
    <dbReference type="NCBI Taxonomy" id="9913"/>
</organismHost>
<organismHost>
    <name type="scientific">Bubalus bubalis</name>
    <name type="common">Domestic water buffalo</name>
    <dbReference type="NCBI Taxonomy" id="89462"/>
</organismHost>
<organismHost>
    <name type="scientific">Culicoides</name>
    <dbReference type="NCBI Taxonomy" id="58271"/>
</organismHost>
<organismHost>
    <name type="scientific">Syncerus caffer</name>
    <name type="common">African buffalo</name>
    <dbReference type="NCBI Taxonomy" id="9970"/>
</organismHost>
<reference key="1">
    <citation type="journal article" date="2000" name="Virus Res.">
        <title>RNA polymerase (L) gene and genome terminal sequences of ephemeroviruses bovine ephemeral fever virus and Adelaide River virus indicate a close relationship to vesiculoviruses.</title>
        <authorList>
            <person name="Dhillon J."/>
            <person name="Cowley J.A."/>
            <person name="Wang Y."/>
            <person name="Walker P.J."/>
        </authorList>
    </citation>
    <scope>NUCLEOTIDE SEQUENCE [GENOMIC RNA]</scope>
</reference>
<name>MATRX_BEFVB</name>
<comment type="function">
    <text evidence="1">Plays a major role in assembly and budding of virion. Completely covers the ribonucleoprotein coil and keep it in condensed bullet-shaped form. Inhibits viral transcription and stimulates replication (By similarity).</text>
</comment>
<comment type="subunit">
    <text evidence="1">Homomultimer. Interacts with nucleoprotein and with the cytoplasmic domain of glycoprotein (By similarity).</text>
</comment>
<comment type="subcellular location">
    <subcellularLocation>
        <location>Virion membrane</location>
        <topology>Peripheral membrane protein</topology>
    </subcellularLocation>
    <subcellularLocation>
        <location evidence="1">Host endomembrane system</location>
        <topology evidence="1">Peripheral membrane protein</topology>
    </subcellularLocation>
</comment>
<comment type="miscellaneous">
    <text evidence="1">Most abundant protein in the virion.</text>
</comment>
<dbReference type="EMBL" id="AF234533">
    <property type="protein sequence ID" value="AAG10412.1"/>
    <property type="molecule type" value="Genomic_RNA"/>
</dbReference>
<dbReference type="RefSeq" id="NP_065401.1">
    <property type="nucleotide sequence ID" value="NC_002526.1"/>
</dbReference>
<dbReference type="GeneID" id="911728"/>
<dbReference type="KEGG" id="vg:911728"/>
<dbReference type="Proteomes" id="UP000008588">
    <property type="component" value="Segment"/>
</dbReference>
<dbReference type="GO" id="GO:0033645">
    <property type="term" value="C:host cell endomembrane system"/>
    <property type="evidence" value="ECO:0007669"/>
    <property type="project" value="UniProtKB-SubCell"/>
</dbReference>
<dbReference type="GO" id="GO:0016020">
    <property type="term" value="C:membrane"/>
    <property type="evidence" value="ECO:0007669"/>
    <property type="project" value="UniProtKB-KW"/>
</dbReference>
<dbReference type="GO" id="GO:0019031">
    <property type="term" value="C:viral envelope"/>
    <property type="evidence" value="ECO:0007669"/>
    <property type="project" value="UniProtKB-KW"/>
</dbReference>
<dbReference type="GO" id="GO:0055036">
    <property type="term" value="C:virion membrane"/>
    <property type="evidence" value="ECO:0007669"/>
    <property type="project" value="UniProtKB-SubCell"/>
</dbReference>
<dbReference type="GO" id="GO:0039660">
    <property type="term" value="F:structural constituent of virion"/>
    <property type="evidence" value="ECO:0007669"/>
    <property type="project" value="UniProtKB-KW"/>
</dbReference>
<dbReference type="InterPro" id="IPR009397">
    <property type="entry name" value="Vesiculo_matrix"/>
</dbReference>
<dbReference type="Pfam" id="PF06326">
    <property type="entry name" value="Vesiculo_matrix"/>
    <property type="match status" value="1"/>
</dbReference>
<evidence type="ECO:0000250" key="1"/>
<evidence type="ECO:0000256" key="2">
    <source>
        <dbReference type="SAM" id="MobiDB-lite"/>
    </source>
</evidence>
<accession>Q9E785</accession>
<proteinExistence type="inferred from homology"/>
<organism>
    <name type="scientific">Bovine ephemeral fever virus (strain BB7721)</name>
    <name type="common">BEFV</name>
    <dbReference type="NCBI Taxonomy" id="928297"/>
    <lineage>
        <taxon>Viruses</taxon>
        <taxon>Riboviria</taxon>
        <taxon>Orthornavirae</taxon>
        <taxon>Negarnaviricota</taxon>
        <taxon>Haploviricotina</taxon>
        <taxon>Monjiviricetes</taxon>
        <taxon>Mononegavirales</taxon>
        <taxon>Rhabdoviridae</taxon>
        <taxon>Alpharhabdovirinae</taxon>
        <taxon>Ephemerovirus</taxon>
        <taxon>Ephemerovirus febris</taxon>
    </lineage>
</organism>
<gene>
    <name type="primary">M</name>
</gene>
<keyword id="KW-0053">Apoptosis</keyword>
<keyword id="KW-1043">Host membrane</keyword>
<keyword id="KW-0472">Membrane</keyword>
<keyword id="KW-1185">Reference proteome</keyword>
<keyword id="KW-0261">Viral envelope protein</keyword>
<keyword id="KW-0468">Viral matrix protein</keyword>
<keyword id="KW-0946">Virion</keyword>
<sequence>MLTLFKKGKPKGGSVDDRNSSYRESDPMLVWGTAPPAYLDVYHDERDKNELQFNTKSYLIQANLEVISSKPIERTTEMLKVLDVMVDEYDGSYLSKALIITSYLTIGTHLRRMMSSVKNNHKYNNGFTEVIEFTGTAEIHPRDQEIKYNKYLMTSHMGEPVSISYQFSGKKSKRRGKNILDAYNLELGNGSKPPDLKDLLESYEINLCYNLKGEHGFTNLVKS</sequence>
<protein>
    <recommendedName>
        <fullName>Matrix protein</fullName>
    </recommendedName>
</protein>
<feature type="chain" id="PRO_0000299245" description="Matrix protein">
    <location>
        <begin position="1"/>
        <end position="223"/>
    </location>
</feature>
<feature type="region of interest" description="Disordered" evidence="2">
    <location>
        <begin position="1"/>
        <end position="23"/>
    </location>
</feature>
<feature type="compositionally biased region" description="Basic residues" evidence="2">
    <location>
        <begin position="1"/>
        <end position="10"/>
    </location>
</feature>
<feature type="compositionally biased region" description="Basic and acidic residues" evidence="2">
    <location>
        <begin position="14"/>
        <end position="23"/>
    </location>
</feature>